<organism>
    <name type="scientific">Staphylococcus carnosus (strain TM300)</name>
    <dbReference type="NCBI Taxonomy" id="396513"/>
    <lineage>
        <taxon>Bacteria</taxon>
        <taxon>Bacillati</taxon>
        <taxon>Bacillota</taxon>
        <taxon>Bacilli</taxon>
        <taxon>Bacillales</taxon>
        <taxon>Staphylococcaceae</taxon>
        <taxon>Staphylococcus</taxon>
    </lineage>
</organism>
<sequence>MSEFTHINEQGNAKMIDVSEKEITKRTATAHSSITVNQDIYQQIVDHTNKKGNVLNTAQIAGIMAAKNTSTIIPMCHPLSLTGIDIAFEWDTTSSYTLNIEATVSTSGKTGVEMEALTAASATALTVYDMTKALDKGMVIGETYLLTKSGGKSGDYRRESK</sequence>
<evidence type="ECO:0000255" key="1">
    <source>
        <dbReference type="HAMAP-Rule" id="MF_01224"/>
    </source>
</evidence>
<gene>
    <name evidence="1" type="primary">moaC</name>
    <name type="ordered locus">Sca_1763</name>
</gene>
<protein>
    <recommendedName>
        <fullName evidence="1">Cyclic pyranopterin monophosphate synthase</fullName>
        <ecNumber evidence="1">4.6.1.17</ecNumber>
    </recommendedName>
    <alternativeName>
        <fullName evidence="1">Molybdenum cofactor biosynthesis protein C</fullName>
    </alternativeName>
</protein>
<feature type="chain" id="PRO_0000097839" description="Cyclic pyranopterin monophosphate synthase">
    <location>
        <begin position="1"/>
        <end position="161"/>
    </location>
</feature>
<feature type="active site" evidence="1">
    <location>
        <position position="129"/>
    </location>
</feature>
<feature type="binding site" evidence="1">
    <location>
        <begin position="75"/>
        <end position="77"/>
    </location>
    <ligand>
        <name>substrate</name>
    </ligand>
</feature>
<feature type="binding site" evidence="1">
    <location>
        <begin position="114"/>
        <end position="115"/>
    </location>
    <ligand>
        <name>substrate</name>
    </ligand>
</feature>
<comment type="function">
    <text evidence="1">Catalyzes the conversion of (8S)-3',8-cyclo-7,8-dihydroguanosine 5'-triphosphate to cyclic pyranopterin monophosphate (cPMP).</text>
</comment>
<comment type="catalytic activity">
    <reaction evidence="1">
        <text>(8S)-3',8-cyclo-7,8-dihydroguanosine 5'-triphosphate = cyclic pyranopterin phosphate + diphosphate</text>
        <dbReference type="Rhea" id="RHEA:49580"/>
        <dbReference type="ChEBI" id="CHEBI:33019"/>
        <dbReference type="ChEBI" id="CHEBI:59648"/>
        <dbReference type="ChEBI" id="CHEBI:131766"/>
        <dbReference type="EC" id="4.6.1.17"/>
    </reaction>
</comment>
<comment type="pathway">
    <text evidence="1">Cofactor biosynthesis; molybdopterin biosynthesis.</text>
</comment>
<comment type="subunit">
    <text evidence="1">Homohexamer; trimer of dimers.</text>
</comment>
<comment type="similarity">
    <text evidence="1">Belongs to the MoaC family.</text>
</comment>
<proteinExistence type="inferred from homology"/>
<keyword id="KW-0456">Lyase</keyword>
<keyword id="KW-0501">Molybdenum cofactor biosynthesis</keyword>
<keyword id="KW-1185">Reference proteome</keyword>
<reference key="1">
    <citation type="journal article" date="1998" name="FEMS Microbiol. Lett.">
        <title>Characterization of moeB- part of the molybdenum cofactor biosynthesis gene cluster in Staphylococcus carnosus.</title>
        <authorList>
            <person name="Neubauer H."/>
            <person name="Pantel I."/>
            <person name="Goetz F."/>
        </authorList>
    </citation>
    <scope>NUCLEOTIDE SEQUENCE [GENOMIC DNA]</scope>
</reference>
<reference key="2">
    <citation type="journal article" date="2009" name="Appl. Environ. Microbiol.">
        <title>Genome analysis of the meat starter culture bacterium Staphylococcus carnosus TM300.</title>
        <authorList>
            <person name="Rosenstein R."/>
            <person name="Nerz C."/>
            <person name="Biswas L."/>
            <person name="Resch A."/>
            <person name="Raddatz G."/>
            <person name="Schuster S.C."/>
            <person name="Goetz F."/>
        </authorList>
    </citation>
    <scope>NUCLEOTIDE SEQUENCE [LARGE SCALE GENOMIC DNA]</scope>
    <source>
        <strain>TM300</strain>
    </source>
</reference>
<dbReference type="EC" id="4.6.1.17" evidence="1"/>
<dbReference type="EMBL" id="AF109295">
    <property type="protein sequence ID" value="AAC83138.1"/>
    <property type="molecule type" value="Genomic_DNA"/>
</dbReference>
<dbReference type="EMBL" id="AM295250">
    <property type="protein sequence ID" value="CAL28668.1"/>
    <property type="molecule type" value="Genomic_DNA"/>
</dbReference>
<dbReference type="RefSeq" id="WP_015901004.1">
    <property type="nucleotide sequence ID" value="NC_012121.1"/>
</dbReference>
<dbReference type="SMR" id="Q9ZIN2"/>
<dbReference type="GeneID" id="93794221"/>
<dbReference type="KEGG" id="sca:SCA_1763"/>
<dbReference type="eggNOG" id="COG0315">
    <property type="taxonomic scope" value="Bacteria"/>
</dbReference>
<dbReference type="HOGENOM" id="CLU_074693_1_1_9"/>
<dbReference type="OrthoDB" id="9794429at2"/>
<dbReference type="BioCyc" id="SCAR396513:SCA_RS08970-MONOMER"/>
<dbReference type="UniPathway" id="UPA00344"/>
<dbReference type="Proteomes" id="UP000000444">
    <property type="component" value="Chromosome"/>
</dbReference>
<dbReference type="GO" id="GO:0061799">
    <property type="term" value="F:cyclic pyranopterin monophosphate synthase activity"/>
    <property type="evidence" value="ECO:0007669"/>
    <property type="project" value="UniProtKB-UniRule"/>
</dbReference>
<dbReference type="GO" id="GO:0006777">
    <property type="term" value="P:Mo-molybdopterin cofactor biosynthetic process"/>
    <property type="evidence" value="ECO:0007669"/>
    <property type="project" value="UniProtKB-UniRule"/>
</dbReference>
<dbReference type="CDD" id="cd01420">
    <property type="entry name" value="MoaC_PE"/>
    <property type="match status" value="1"/>
</dbReference>
<dbReference type="Gene3D" id="3.30.70.640">
    <property type="entry name" value="Molybdopterin cofactor biosynthesis C (MoaC) domain"/>
    <property type="match status" value="1"/>
</dbReference>
<dbReference type="HAMAP" id="MF_01224_B">
    <property type="entry name" value="MoaC_B"/>
    <property type="match status" value="1"/>
</dbReference>
<dbReference type="InterPro" id="IPR023045">
    <property type="entry name" value="MoaC"/>
</dbReference>
<dbReference type="InterPro" id="IPR047594">
    <property type="entry name" value="MoaC_bact/euk"/>
</dbReference>
<dbReference type="InterPro" id="IPR036522">
    <property type="entry name" value="MoaC_sf"/>
</dbReference>
<dbReference type="InterPro" id="IPR050105">
    <property type="entry name" value="MoCo_biosynth_MoaA/MoaC"/>
</dbReference>
<dbReference type="InterPro" id="IPR002820">
    <property type="entry name" value="Mopterin_CF_biosynth-C_dom"/>
</dbReference>
<dbReference type="NCBIfam" id="TIGR00581">
    <property type="entry name" value="moaC"/>
    <property type="match status" value="1"/>
</dbReference>
<dbReference type="NCBIfam" id="NF006870">
    <property type="entry name" value="PRK09364.1"/>
    <property type="match status" value="1"/>
</dbReference>
<dbReference type="PANTHER" id="PTHR22960:SF29">
    <property type="entry name" value="CYCLIC PYRANOPTERIN MONOPHOSPHATE SYNTHASE"/>
    <property type="match status" value="1"/>
</dbReference>
<dbReference type="PANTHER" id="PTHR22960">
    <property type="entry name" value="MOLYBDOPTERIN COFACTOR SYNTHESIS PROTEIN A"/>
    <property type="match status" value="1"/>
</dbReference>
<dbReference type="Pfam" id="PF01967">
    <property type="entry name" value="MoaC"/>
    <property type="match status" value="1"/>
</dbReference>
<dbReference type="SUPFAM" id="SSF55040">
    <property type="entry name" value="Molybdenum cofactor biosynthesis protein C, MoaC"/>
    <property type="match status" value="1"/>
</dbReference>
<accession>Q9ZIN2</accession>
<accession>B9DLY8</accession>
<name>MOAC_STACT</name>